<keyword id="KW-0012">Acyltransferase</keyword>
<keyword id="KW-0963">Cytoplasm</keyword>
<keyword id="KW-0536">Nodulation</keyword>
<keyword id="KW-0808">Transferase</keyword>
<reference key="1">
    <citation type="journal article" date="1986" name="Nucleic Acids Res.">
        <title>Conserved nodulation genes from the non-legume symbiont Bradyrhizobium sp. (Parasponia).</title>
        <authorList>
            <person name="Scott K.F."/>
        </authorList>
    </citation>
    <scope>NUCLEOTIDE SEQUENCE [GENOMIC DNA]</scope>
</reference>
<protein>
    <recommendedName>
        <fullName>Nodulation protein A</fullName>
        <ecNumber>2.3.1.-</ecNumber>
    </recommendedName>
</protein>
<feature type="chain" id="PRO_0000196333" description="Nodulation protein A">
    <location>
        <begin position="1"/>
        <end position="210"/>
    </location>
</feature>
<gene>
    <name type="primary">nodA</name>
</gene>
<proteinExistence type="inferred from homology"/>
<accession>P04674</accession>
<sequence length="210" mass="23321">MNIAVSRSAEEPSARTQVQWSLRWENELQLADHAELADFFRNSYGPTGAFNAQPFEGNRSWAGARPELRAIGYDARGVRAHIGLLRRFIKIDGVDLLVAELGLYAVRPDLEGLGISHSMRVMYPALQQLGVPFGFGTVRPALERHLTRLVGRQGLATLMSGVRVRSTQPDVYPNLSPIRIEDVLVVVFPLERPIGEWPAGTIIDRNGPEL</sequence>
<evidence type="ECO:0000250" key="1"/>
<evidence type="ECO:0000305" key="2"/>
<name>NODA_BRASP</name>
<dbReference type="EC" id="2.3.1.-"/>
<dbReference type="EMBL" id="X03720">
    <property type="protein sequence ID" value="CAA27348.1"/>
    <property type="molecule type" value="Genomic_DNA"/>
</dbReference>
<dbReference type="SMR" id="P04674"/>
<dbReference type="GO" id="GO:0005829">
    <property type="term" value="C:cytosol"/>
    <property type="evidence" value="ECO:0007669"/>
    <property type="project" value="InterPro"/>
</dbReference>
<dbReference type="GO" id="GO:0016746">
    <property type="term" value="F:acyltransferase activity"/>
    <property type="evidence" value="ECO:0007669"/>
    <property type="project" value="UniProtKB-UniRule"/>
</dbReference>
<dbReference type="Gene3D" id="3.40.630.30">
    <property type="match status" value="1"/>
</dbReference>
<dbReference type="HAMAP" id="MF_00084">
    <property type="entry name" value="NodA"/>
    <property type="match status" value="1"/>
</dbReference>
<dbReference type="InterPro" id="IPR003484">
    <property type="entry name" value="NodA"/>
</dbReference>
<dbReference type="InterPro" id="IPR020567">
    <property type="entry name" value="Nodulation_prot_NodA_CS"/>
</dbReference>
<dbReference type="NCBIfam" id="TIGR04245">
    <property type="entry name" value="nodulat_NodA"/>
    <property type="match status" value="1"/>
</dbReference>
<dbReference type="NCBIfam" id="NF001974">
    <property type="entry name" value="PRK00756.1"/>
    <property type="match status" value="1"/>
</dbReference>
<dbReference type="Pfam" id="PF02474">
    <property type="entry name" value="NodA"/>
    <property type="match status" value="1"/>
</dbReference>
<dbReference type="PROSITE" id="PS01349">
    <property type="entry name" value="NODA"/>
    <property type="match status" value="1"/>
</dbReference>
<comment type="function">
    <text evidence="1">N-acyltransferase required for nodulation. Acts in the production of a small, heat-stable compound (Nod) that stimulates mitosis in various plant protoplasts (By similarity).</text>
</comment>
<comment type="subcellular location">
    <subcellularLocation>
        <location evidence="1">Cytoplasm</location>
    </subcellularLocation>
</comment>
<comment type="similarity">
    <text evidence="2">Belongs to the NodA family.</text>
</comment>
<organism>
    <name type="scientific">Bradyrhizobium sp. (strain ANU 289)</name>
    <dbReference type="NCBI Taxonomy" id="186901"/>
    <lineage>
        <taxon>Bacteria</taxon>
        <taxon>Pseudomonadati</taxon>
        <taxon>Pseudomonadota</taxon>
        <taxon>Alphaproteobacteria</taxon>
        <taxon>Hyphomicrobiales</taxon>
        <taxon>Nitrobacteraceae</taxon>
        <taxon>Bradyrhizobium</taxon>
    </lineage>
</organism>